<keyword id="KW-1003">Cell membrane</keyword>
<keyword id="KW-0444">Lipid biosynthesis</keyword>
<keyword id="KW-0443">Lipid metabolism</keyword>
<keyword id="KW-0472">Membrane</keyword>
<keyword id="KW-0594">Phospholipid biosynthesis</keyword>
<keyword id="KW-1208">Phospholipid metabolism</keyword>
<keyword id="KW-1185">Reference proteome</keyword>
<keyword id="KW-0808">Transferase</keyword>
<keyword id="KW-0812">Transmembrane</keyword>
<keyword id="KW-1133">Transmembrane helix</keyword>
<sequence>MSRSTRYSVAVSAQPETGQIAGRARIANLANILTLLRLVMVPVFLLALFYGGGHHSAARVVAWAIFATACITDRFDGLLARNYGMATEFGAFVDPIADKTLIGSALIGLSMLGDLPWWVTVLILTRELGVTVLRLAVIRRGVIPASWGGKLKTFVQAVAIGLFVLPLSGPLHVAAVVVMAAAILLTVITGVDYVARALRDIGGIRQTAS</sequence>
<accession>P9WPG2</accession>
<accession>L0TAI5</accession>
<accession>O33288</accession>
<accession>Q7D6N5</accession>
<organism>
    <name type="scientific">Mycobacterium tuberculosis (strain CDC 1551 / Oshkosh)</name>
    <dbReference type="NCBI Taxonomy" id="83331"/>
    <lineage>
        <taxon>Bacteria</taxon>
        <taxon>Bacillati</taxon>
        <taxon>Actinomycetota</taxon>
        <taxon>Actinomycetes</taxon>
        <taxon>Mycobacteriales</taxon>
        <taxon>Mycobacteriaceae</taxon>
        <taxon>Mycobacterium</taxon>
        <taxon>Mycobacterium tuberculosis complex</taxon>
    </lineage>
</organism>
<proteinExistence type="inferred from homology"/>
<dbReference type="EC" id="2.7.8.5" evidence="1"/>
<dbReference type="EMBL" id="AE000516">
    <property type="protein sequence ID" value="AAK47137.1"/>
    <property type="molecule type" value="Genomic_DNA"/>
</dbReference>
<dbReference type="PIR" id="A70879">
    <property type="entry name" value="A70879"/>
</dbReference>
<dbReference type="SMR" id="P9WPG2"/>
<dbReference type="KEGG" id="mtc:MT2817"/>
<dbReference type="PATRIC" id="fig|83331.31.peg.3037"/>
<dbReference type="HOGENOM" id="CLU_051314_2_0_11"/>
<dbReference type="UniPathway" id="UPA00085"/>
<dbReference type="Proteomes" id="UP000001020">
    <property type="component" value="Chromosome"/>
</dbReference>
<dbReference type="GO" id="GO:0005886">
    <property type="term" value="C:plasma membrane"/>
    <property type="evidence" value="ECO:0007669"/>
    <property type="project" value="UniProtKB-SubCell"/>
</dbReference>
<dbReference type="GO" id="GO:0008444">
    <property type="term" value="F:CDP-diacylglycerol-glycerol-3-phosphate 3-phosphatidyltransferase activity"/>
    <property type="evidence" value="ECO:0007669"/>
    <property type="project" value="UniProtKB-EC"/>
</dbReference>
<dbReference type="GO" id="GO:0046474">
    <property type="term" value="P:glycerophospholipid biosynthetic process"/>
    <property type="evidence" value="ECO:0007669"/>
    <property type="project" value="TreeGrafter"/>
</dbReference>
<dbReference type="FunFam" id="1.20.120.1760:FF:000007">
    <property type="entry name" value="CDP-diacylglycerol--glycerol-3-phosphate 3-phosphatidyltransferase"/>
    <property type="match status" value="1"/>
</dbReference>
<dbReference type="Gene3D" id="1.20.120.1760">
    <property type="match status" value="1"/>
</dbReference>
<dbReference type="InterPro" id="IPR050324">
    <property type="entry name" value="CDP-alcohol_PTase-I"/>
</dbReference>
<dbReference type="InterPro" id="IPR000462">
    <property type="entry name" value="CDP-OH_P_trans"/>
</dbReference>
<dbReference type="InterPro" id="IPR043130">
    <property type="entry name" value="CDP-OH_PTrfase_TM_dom"/>
</dbReference>
<dbReference type="InterPro" id="IPR048254">
    <property type="entry name" value="CDP_ALCOHOL_P_TRANSF_CS"/>
</dbReference>
<dbReference type="InterPro" id="IPR004570">
    <property type="entry name" value="Phosphatidylglycerol_P_synth"/>
</dbReference>
<dbReference type="NCBIfam" id="TIGR00560">
    <property type="entry name" value="pgsA"/>
    <property type="match status" value="1"/>
</dbReference>
<dbReference type="PANTHER" id="PTHR14269">
    <property type="entry name" value="CDP-DIACYLGLYCEROL--GLYCEROL-3-PHOSPHATE 3-PHOSPHATIDYLTRANSFERASE-RELATED"/>
    <property type="match status" value="1"/>
</dbReference>
<dbReference type="PANTHER" id="PTHR14269:SF52">
    <property type="entry name" value="PHOSPHATIDYLGLYCEROPHOSPHATE SYNTHASE-RELATED"/>
    <property type="match status" value="1"/>
</dbReference>
<dbReference type="Pfam" id="PF01066">
    <property type="entry name" value="CDP-OH_P_transf"/>
    <property type="match status" value="1"/>
</dbReference>
<dbReference type="PIRSF" id="PIRSF000847">
    <property type="entry name" value="Phos_ph_gly_syn"/>
    <property type="match status" value="1"/>
</dbReference>
<dbReference type="PROSITE" id="PS00379">
    <property type="entry name" value="CDP_ALCOHOL_P_TRANSF"/>
    <property type="match status" value="1"/>
</dbReference>
<protein>
    <recommendedName>
        <fullName evidence="1">Probable phosphatidylglycerophosphate synthase</fullName>
        <shortName evidence="1">PGP synthase</shortName>
        <shortName evidence="1">PGPS</shortName>
        <ecNumber evidence="1">2.7.8.5</ecNumber>
    </recommendedName>
    <alternativeName>
        <fullName>CDP-diacylglycerol--glycerol-3-phosphate phosphatidyltransferase</fullName>
    </alternativeName>
</protein>
<reference key="1">
    <citation type="journal article" date="2002" name="J. Bacteriol.">
        <title>Whole-genome comparison of Mycobacterium tuberculosis clinical and laboratory strains.</title>
        <authorList>
            <person name="Fleischmann R.D."/>
            <person name="Alland D."/>
            <person name="Eisen J.A."/>
            <person name="Carpenter L."/>
            <person name="White O."/>
            <person name="Peterson J.D."/>
            <person name="DeBoy R.T."/>
            <person name="Dodson R.J."/>
            <person name="Gwinn M.L."/>
            <person name="Haft D.H."/>
            <person name="Hickey E.K."/>
            <person name="Kolonay J.F."/>
            <person name="Nelson W.C."/>
            <person name="Umayam L.A."/>
            <person name="Ermolaeva M.D."/>
            <person name="Salzberg S.L."/>
            <person name="Delcher A."/>
            <person name="Utterback T.R."/>
            <person name="Weidman J.F."/>
            <person name="Khouri H.M."/>
            <person name="Gill J."/>
            <person name="Mikula A."/>
            <person name="Bishai W."/>
            <person name="Jacobs W.R. Jr."/>
            <person name="Venter J.C."/>
            <person name="Fraser C.M."/>
        </authorList>
    </citation>
    <scope>NUCLEOTIDE SEQUENCE [LARGE SCALE GENOMIC DNA]</scope>
    <source>
        <strain>CDC 1551 / Oshkosh</strain>
    </source>
</reference>
<comment type="function">
    <text evidence="1">Probably catalyzes the synthesis of phosphatidylglycerophosphate by transferring a phosphatidyl group from CDP-diacylglycerol to glycerol 3-phosphate.</text>
</comment>
<comment type="catalytic activity">
    <reaction evidence="1">
        <text>a CDP-1,2-diacyl-sn-glycerol + sn-glycerol 3-phosphate = a 1,2-diacyl-sn-glycero-3-phospho-(1'-sn-glycero-3'-phosphate) + CMP + H(+)</text>
        <dbReference type="Rhea" id="RHEA:12593"/>
        <dbReference type="ChEBI" id="CHEBI:15378"/>
        <dbReference type="ChEBI" id="CHEBI:57597"/>
        <dbReference type="ChEBI" id="CHEBI:58332"/>
        <dbReference type="ChEBI" id="CHEBI:60110"/>
        <dbReference type="ChEBI" id="CHEBI:60377"/>
        <dbReference type="EC" id="2.7.8.5"/>
    </reaction>
</comment>
<comment type="pathway">
    <text evidence="1">Lipid metabolism; phospholipid metabolism.</text>
</comment>
<comment type="subcellular location">
    <subcellularLocation>
        <location evidence="3">Cell membrane</location>
        <topology evidence="3">Multi-pass membrane protein</topology>
    </subcellularLocation>
</comment>
<comment type="similarity">
    <text evidence="3">Belongs to the CDP-alcohol phosphatidyltransferase class-I family.</text>
</comment>
<name>PGSA_MYCTO</name>
<evidence type="ECO:0000250" key="1">
    <source>
        <dbReference type="UniProtKB" id="P9WPG3"/>
    </source>
</evidence>
<evidence type="ECO:0000255" key="2"/>
<evidence type="ECO:0000305" key="3"/>
<evidence type="ECO:0000312" key="4">
    <source>
        <dbReference type="EMBL" id="AAK47137.1"/>
    </source>
</evidence>
<feature type="chain" id="PRO_0000426957" description="Probable phosphatidylglycerophosphate synthase">
    <location>
        <begin position="1"/>
        <end position="209"/>
    </location>
</feature>
<feature type="transmembrane region" description="Helical" evidence="2">
    <location>
        <begin position="32"/>
        <end position="52"/>
    </location>
</feature>
<feature type="transmembrane region" description="Helical" evidence="2">
    <location>
        <begin position="105"/>
        <end position="125"/>
    </location>
</feature>
<feature type="transmembrane region" description="Helical" evidence="2">
    <location>
        <begin position="147"/>
        <end position="167"/>
    </location>
</feature>
<feature type="transmembrane region" description="Helical" evidence="2">
    <location>
        <begin position="171"/>
        <end position="191"/>
    </location>
</feature>
<gene>
    <name evidence="4" type="primary">pgsA-2</name>
    <name type="ordered locus">MT2817</name>
</gene>